<feature type="chain" id="PRO_0000099736" description="Uncharacterized protein FPV249">
    <location>
        <begin position="1"/>
        <end position="105"/>
    </location>
</feature>
<keyword id="KW-0244">Early protein</keyword>
<keyword id="KW-1185">Reference proteome</keyword>
<name>V249_FOWPN</name>
<dbReference type="EMBL" id="D00295">
    <property type="protein sequence ID" value="BAA00197.1"/>
    <property type="molecule type" value="Genomic_DNA"/>
</dbReference>
<dbReference type="EMBL" id="AF198100">
    <property type="protein sequence ID" value="AAF44593.1"/>
    <property type="molecule type" value="Genomic_DNA"/>
</dbReference>
<dbReference type="PIR" id="E29963">
    <property type="entry name" value="WMVZFF"/>
</dbReference>
<dbReference type="RefSeq" id="NP_039212.1">
    <property type="nucleotide sequence ID" value="NC_002188.1"/>
</dbReference>
<dbReference type="SMR" id="P14363"/>
<dbReference type="GeneID" id="1486821"/>
<dbReference type="KEGG" id="vg:1486821"/>
<dbReference type="Proteomes" id="UP000008597">
    <property type="component" value="Segment"/>
</dbReference>
<sequence length="105" mass="12574">MIIRRNNKALGSVMSDFIKTINEEYDSNIKEIKSEIDIKCNSILKELDEKYRQEIKELCMIVDQLKNQYKIIDNIYSRYITEIRIQLLALKEENKCLKEELTKLK</sequence>
<accession>P14363</accession>
<organism>
    <name type="scientific">Fowlpox virus (strain NVSL)</name>
    <name type="common">FPV</name>
    <dbReference type="NCBI Taxonomy" id="928301"/>
    <lineage>
        <taxon>Viruses</taxon>
        <taxon>Varidnaviria</taxon>
        <taxon>Bamfordvirae</taxon>
        <taxon>Nucleocytoviricota</taxon>
        <taxon>Pokkesviricetes</taxon>
        <taxon>Chitovirales</taxon>
        <taxon>Poxviridae</taxon>
        <taxon>Chordopoxvirinae</taxon>
        <taxon>Avipoxvirus</taxon>
        <taxon>Fowlpox virus</taxon>
    </lineage>
</organism>
<reference key="1">
    <citation type="journal article" date="1988" name="J. Gen. Virol.">
        <title>Sequence analysis of an 11.2 kilobase, near-terminal, BamHI fragment of fowlpox virus.</title>
        <authorList>
            <person name="Tomley F."/>
            <person name="Binns M."/>
            <person name="Campbell J."/>
            <person name="Boursnell M.E.G."/>
        </authorList>
    </citation>
    <scope>NUCLEOTIDE SEQUENCE [GENOMIC DNA]</scope>
    <source>
        <strain>FP-9 / Isolate HP-438</strain>
    </source>
</reference>
<reference key="2">
    <citation type="journal article" date="2000" name="J. Virol.">
        <title>The genome of fowlpox virus.</title>
        <authorList>
            <person name="Afonso C.L."/>
            <person name="Tulman E.R."/>
            <person name="Lu Z."/>
            <person name="Zsak L."/>
            <person name="Kutish G.F."/>
            <person name="Rock D.L."/>
        </authorList>
    </citation>
    <scope>NUCLEOTIDE SEQUENCE [LARGE SCALE GENOMIC DNA]</scope>
</reference>
<gene>
    <name type="ordered locus">FPV249</name>
</gene>
<organismHost>
    <name type="scientific">Vertebrata</name>
    <dbReference type="NCBI Taxonomy" id="7742"/>
</organismHost>
<proteinExistence type="predicted"/>
<protein>
    <recommendedName>
        <fullName>Uncharacterized protein FPV249</fullName>
    </recommendedName>
    <alternativeName>
        <fullName>BamHI-ORF5</fullName>
    </alternativeName>
</protein>